<dbReference type="EMBL" id="CP000468">
    <property type="protein sequence ID" value="ABJ00012.1"/>
    <property type="molecule type" value="Genomic_DNA"/>
</dbReference>
<dbReference type="RefSeq" id="WP_001041795.1">
    <property type="nucleotide sequence ID" value="NZ_CADILS010000006.1"/>
</dbReference>
<dbReference type="SMR" id="A1A8M2"/>
<dbReference type="KEGG" id="ecv:APECO1_1458"/>
<dbReference type="HOGENOM" id="CLU_034180_11_0_6"/>
<dbReference type="Proteomes" id="UP000008216">
    <property type="component" value="Chromosome"/>
</dbReference>
<dbReference type="GO" id="GO:0005886">
    <property type="term" value="C:plasma membrane"/>
    <property type="evidence" value="ECO:0007669"/>
    <property type="project" value="UniProtKB-SubCell"/>
</dbReference>
<dbReference type="GO" id="GO:0042931">
    <property type="term" value="F:enterobactin transmembrane transporter activity"/>
    <property type="evidence" value="ECO:0007669"/>
    <property type="project" value="InterPro"/>
</dbReference>
<dbReference type="CDD" id="cd06173">
    <property type="entry name" value="MFS_MefA_like"/>
    <property type="match status" value="1"/>
</dbReference>
<dbReference type="FunFam" id="1.20.1250.20:FF:000056">
    <property type="entry name" value="Enterobactin exporter EntS"/>
    <property type="match status" value="1"/>
</dbReference>
<dbReference type="Gene3D" id="1.20.1250.20">
    <property type="entry name" value="MFS general substrate transporter like domains"/>
    <property type="match status" value="1"/>
</dbReference>
<dbReference type="HAMAP" id="MF_01436">
    <property type="entry name" value="MFS_EntS"/>
    <property type="match status" value="1"/>
</dbReference>
<dbReference type="InterPro" id="IPR023722">
    <property type="entry name" value="Enterobactin_exp_EntS"/>
</dbReference>
<dbReference type="InterPro" id="IPR020846">
    <property type="entry name" value="MFS_dom"/>
</dbReference>
<dbReference type="InterPro" id="IPR036259">
    <property type="entry name" value="MFS_trans_sf"/>
</dbReference>
<dbReference type="InterPro" id="IPR010290">
    <property type="entry name" value="TM_effector"/>
</dbReference>
<dbReference type="NCBIfam" id="NF007792">
    <property type="entry name" value="PRK10489.1"/>
    <property type="match status" value="1"/>
</dbReference>
<dbReference type="PANTHER" id="PTHR23513:SF9">
    <property type="entry name" value="ENTEROBACTIN EXPORTER ENTS"/>
    <property type="match status" value="1"/>
</dbReference>
<dbReference type="PANTHER" id="PTHR23513">
    <property type="entry name" value="INTEGRAL MEMBRANE EFFLUX PROTEIN-RELATED"/>
    <property type="match status" value="1"/>
</dbReference>
<dbReference type="Pfam" id="PF05977">
    <property type="entry name" value="MFS_3"/>
    <property type="match status" value="1"/>
</dbReference>
<dbReference type="SUPFAM" id="SSF103473">
    <property type="entry name" value="MFS general substrate transporter"/>
    <property type="match status" value="1"/>
</dbReference>
<dbReference type="PROSITE" id="PS50850">
    <property type="entry name" value="MFS"/>
    <property type="match status" value="1"/>
</dbReference>
<protein>
    <recommendedName>
        <fullName evidence="1">Enterobactin exporter EntS</fullName>
    </recommendedName>
</protein>
<organism>
    <name type="scientific">Escherichia coli O1:K1 / APEC</name>
    <dbReference type="NCBI Taxonomy" id="405955"/>
    <lineage>
        <taxon>Bacteria</taxon>
        <taxon>Pseudomonadati</taxon>
        <taxon>Pseudomonadota</taxon>
        <taxon>Gammaproteobacteria</taxon>
        <taxon>Enterobacterales</taxon>
        <taxon>Enterobacteriaceae</taxon>
        <taxon>Escherichia</taxon>
    </lineage>
</organism>
<evidence type="ECO:0000255" key="1">
    <source>
        <dbReference type="HAMAP-Rule" id="MF_01436"/>
    </source>
</evidence>
<comment type="function">
    <text evidence="1">Component of an export pathway for enterobactin.</text>
</comment>
<comment type="subcellular location">
    <subcellularLocation>
        <location evidence="1">Cell inner membrane</location>
        <topology evidence="1">Multi-pass membrane protein</topology>
    </subcellularLocation>
</comment>
<comment type="similarity">
    <text evidence="1">Belongs to the major facilitator superfamily. EntS (TC 2.A.1.38) family.</text>
</comment>
<gene>
    <name evidence="1" type="primary">entS</name>
    <name type="ordered locus">Ecok1_05180</name>
    <name type="ORF">APECO1_1458</name>
</gene>
<reference key="1">
    <citation type="journal article" date="2007" name="J. Bacteriol.">
        <title>The genome sequence of avian pathogenic Escherichia coli strain O1:K1:H7 shares strong similarities with human extraintestinal pathogenic E. coli genomes.</title>
        <authorList>
            <person name="Johnson T.J."/>
            <person name="Kariyawasam S."/>
            <person name="Wannemuehler Y."/>
            <person name="Mangiamele P."/>
            <person name="Johnson S.J."/>
            <person name="Doetkott C."/>
            <person name="Skyberg J.A."/>
            <person name="Lynne A.M."/>
            <person name="Johnson J.R."/>
            <person name="Nolan L.K."/>
        </authorList>
    </citation>
    <scope>NUCLEOTIDE SEQUENCE [LARGE SCALE GENOMIC DNA]</scope>
</reference>
<accession>A1A8M2</accession>
<sequence>MNKQSWLLNLSLLKTHPAFRAVFLARFISIVSLGLLGVAVPVQIQMMTHSTWQVGLSVTLTGGAMFVGLMVGGVLADRYERKKVILLARGTCGIGFIGLCLNALLPEPSLLAIYLLGLWDGFFASLGVTALLAATPALVGRENLMQAGAITMLTVRLGSVISPMIGGLLLATGGVAWNYGLAAAGTFITLLPLLSLPALPPPPQPREHPLKSLLAGFRFLLASPLVGGIALLGGLLTMASAVRVLYPALADNWQMSAAQIGFLYAAIPLGAAIGALTSGKLAHSVRPGLLMLLSTLGAFLAISLFGLMPMWILGVVCLALFGWLSAVSSLLQYTMLQTQTPEAMLGRINGLWTAQNVTGDAIGAALLGGLGAMMTPVASASASGFGLLIIGVLLLLVLVELRRFRQTPPQVTASDS</sequence>
<name>ENTS_ECOK1</name>
<feature type="chain" id="PRO_0000301859" description="Enterobactin exporter EntS">
    <location>
        <begin position="1"/>
        <end position="416"/>
    </location>
</feature>
<feature type="topological domain" description="Cytoplasmic" evidence="1">
    <location>
        <begin position="1"/>
        <end position="21"/>
    </location>
</feature>
<feature type="transmembrane region" description="Helical" evidence="1">
    <location>
        <begin position="22"/>
        <end position="42"/>
    </location>
</feature>
<feature type="topological domain" description="Periplasmic" evidence="1">
    <location>
        <begin position="43"/>
        <end position="55"/>
    </location>
</feature>
<feature type="transmembrane region" description="Helical" evidence="1">
    <location>
        <begin position="56"/>
        <end position="76"/>
    </location>
</feature>
<feature type="topological domain" description="Cytoplasmic" evidence="1">
    <location>
        <begin position="77"/>
        <end position="83"/>
    </location>
</feature>
<feature type="transmembrane region" description="Helical" evidence="1">
    <location>
        <begin position="84"/>
        <end position="104"/>
    </location>
</feature>
<feature type="topological domain" description="Periplasmic" evidence="1">
    <location>
        <begin position="105"/>
        <end position="109"/>
    </location>
</feature>
<feature type="transmembrane region" description="Helical" evidence="1">
    <location>
        <begin position="110"/>
        <end position="130"/>
    </location>
</feature>
<feature type="topological domain" description="Cytoplasmic" evidence="1">
    <location>
        <begin position="131"/>
        <end position="156"/>
    </location>
</feature>
<feature type="transmembrane region" description="Helical" evidence="1">
    <location>
        <begin position="157"/>
        <end position="177"/>
    </location>
</feature>
<feature type="topological domain" description="Periplasmic" evidence="1">
    <location>
        <position position="178"/>
    </location>
</feature>
<feature type="transmembrane region" description="Helical" evidence="1">
    <location>
        <begin position="179"/>
        <end position="199"/>
    </location>
</feature>
<feature type="topological domain" description="Cytoplasmic" evidence="1">
    <location>
        <begin position="200"/>
        <end position="218"/>
    </location>
</feature>
<feature type="transmembrane region" description="Helical" evidence="1">
    <location>
        <begin position="219"/>
        <end position="239"/>
    </location>
</feature>
<feature type="topological domain" description="Periplasmic" evidence="1">
    <location>
        <begin position="240"/>
        <end position="256"/>
    </location>
</feature>
<feature type="transmembrane region" description="Helical" evidence="1">
    <location>
        <begin position="257"/>
        <end position="277"/>
    </location>
</feature>
<feature type="topological domain" description="Cytoplasmic" evidence="1">
    <location>
        <begin position="278"/>
        <end position="287"/>
    </location>
</feature>
<feature type="transmembrane region" description="Helical" evidence="1">
    <location>
        <begin position="288"/>
        <end position="307"/>
    </location>
</feature>
<feature type="topological domain" description="Periplasmic" evidence="1">
    <location>
        <begin position="308"/>
        <end position="313"/>
    </location>
</feature>
<feature type="transmembrane region" description="Helical" evidence="1">
    <location>
        <begin position="314"/>
        <end position="336"/>
    </location>
</feature>
<feature type="topological domain" description="Cytoplasmic" evidence="1">
    <location>
        <begin position="337"/>
        <end position="356"/>
    </location>
</feature>
<feature type="transmembrane region" description="Helical" evidence="1">
    <location>
        <begin position="357"/>
        <end position="377"/>
    </location>
</feature>
<feature type="topological domain" description="Periplasmic" evidence="1">
    <location>
        <position position="378"/>
    </location>
</feature>
<feature type="transmembrane region" description="Helical" evidence="1">
    <location>
        <begin position="379"/>
        <end position="399"/>
    </location>
</feature>
<feature type="topological domain" description="Cytoplasmic" evidence="1">
    <location>
        <begin position="400"/>
        <end position="416"/>
    </location>
</feature>
<keyword id="KW-0997">Cell inner membrane</keyword>
<keyword id="KW-1003">Cell membrane</keyword>
<keyword id="KW-0472">Membrane</keyword>
<keyword id="KW-1185">Reference proteome</keyword>
<keyword id="KW-0812">Transmembrane</keyword>
<keyword id="KW-1133">Transmembrane helix</keyword>
<keyword id="KW-0813">Transport</keyword>
<proteinExistence type="inferred from homology"/>